<evidence type="ECO:0000250" key="1"/>
<evidence type="ECO:0000255" key="2"/>
<evidence type="ECO:0000255" key="3">
    <source>
        <dbReference type="PROSITE-ProRule" id="PRU00175"/>
    </source>
</evidence>
<evidence type="ECO:0000256" key="4">
    <source>
        <dbReference type="SAM" id="MobiDB-lite"/>
    </source>
</evidence>
<evidence type="ECO:0000305" key="5"/>
<keyword id="KW-0472">Membrane</keyword>
<keyword id="KW-0479">Metal-binding</keyword>
<keyword id="KW-1185">Reference proteome</keyword>
<keyword id="KW-0808">Transferase</keyword>
<keyword id="KW-0812">Transmembrane</keyword>
<keyword id="KW-1133">Transmembrane helix</keyword>
<keyword id="KW-0833">Ubl conjugation pathway</keyword>
<keyword id="KW-0862">Zinc</keyword>
<keyword id="KW-0863">Zinc-finger</keyword>
<comment type="catalytic activity">
    <reaction evidence="5">
        <text>S-ubiquitinyl-[E2 ubiquitin-conjugating enzyme]-L-cysteine + [acceptor protein]-L-lysine = [E2 ubiquitin-conjugating enzyme]-L-cysteine + N(6)-ubiquitinyl-[acceptor protein]-L-lysine.</text>
        <dbReference type="EC" id="2.3.2.27"/>
    </reaction>
</comment>
<comment type="pathway">
    <text>Protein modification; protein ubiquitination.</text>
</comment>
<comment type="subcellular location">
    <subcellularLocation>
        <location evidence="5">Membrane</location>
        <topology evidence="5">Single-pass membrane protein</topology>
    </subcellularLocation>
</comment>
<comment type="domain">
    <text evidence="1">The RING-type zinc finger domain mediates binding to an E2 ubiquitin-conjugating enzyme.</text>
</comment>
<comment type="similarity">
    <text evidence="5">Belongs to the RING-type zinc finger family. ATL subfamily.</text>
</comment>
<dbReference type="EC" id="2.3.2.27" evidence="5"/>
<dbReference type="EMBL" id="AC005956">
    <property type="protein sequence ID" value="AAD23718.1"/>
    <property type="molecule type" value="Genomic_DNA"/>
</dbReference>
<dbReference type="EMBL" id="CP002685">
    <property type="protein sequence ID" value="AEC10110.1"/>
    <property type="molecule type" value="Genomic_DNA"/>
</dbReference>
<dbReference type="EMBL" id="BT010853">
    <property type="protein sequence ID" value="AAR24220.1"/>
    <property type="molecule type" value="mRNA"/>
</dbReference>
<dbReference type="EMBL" id="BT011323">
    <property type="protein sequence ID" value="AAR92359.1"/>
    <property type="molecule type" value="mRNA"/>
</dbReference>
<dbReference type="PIR" id="H84852">
    <property type="entry name" value="H84852"/>
</dbReference>
<dbReference type="RefSeq" id="NP_181764.1">
    <property type="nucleotide sequence ID" value="NM_129797.3"/>
</dbReference>
<dbReference type="SMR" id="Q9SLC4"/>
<dbReference type="FunCoup" id="Q9SLC4">
    <property type="interactions" value="1"/>
</dbReference>
<dbReference type="STRING" id="3702.Q9SLC4"/>
<dbReference type="iPTMnet" id="Q9SLC4"/>
<dbReference type="PaxDb" id="3702-AT2G42350.1"/>
<dbReference type="EnsemblPlants" id="AT2G42350.1">
    <property type="protein sequence ID" value="AT2G42350.1"/>
    <property type="gene ID" value="AT2G42350"/>
</dbReference>
<dbReference type="GeneID" id="818836"/>
<dbReference type="Gramene" id="AT2G42350.1">
    <property type="protein sequence ID" value="AT2G42350.1"/>
    <property type="gene ID" value="AT2G42350"/>
</dbReference>
<dbReference type="KEGG" id="ath:AT2G42350"/>
<dbReference type="Araport" id="AT2G42350"/>
<dbReference type="TAIR" id="AT2G42350">
    <property type="gene designation" value="ATL40"/>
</dbReference>
<dbReference type="eggNOG" id="KOG0800">
    <property type="taxonomic scope" value="Eukaryota"/>
</dbReference>
<dbReference type="HOGENOM" id="CLU_066543_2_1_1"/>
<dbReference type="InParanoid" id="Q9SLC4"/>
<dbReference type="OMA" id="EDHERNR"/>
<dbReference type="PhylomeDB" id="Q9SLC4"/>
<dbReference type="UniPathway" id="UPA00143"/>
<dbReference type="PRO" id="PR:Q9SLC4"/>
<dbReference type="Proteomes" id="UP000006548">
    <property type="component" value="Chromosome 2"/>
</dbReference>
<dbReference type="ExpressionAtlas" id="Q9SLC4">
    <property type="expression patterns" value="baseline and differential"/>
</dbReference>
<dbReference type="GO" id="GO:0016020">
    <property type="term" value="C:membrane"/>
    <property type="evidence" value="ECO:0007669"/>
    <property type="project" value="UniProtKB-SubCell"/>
</dbReference>
<dbReference type="GO" id="GO:0016740">
    <property type="term" value="F:transferase activity"/>
    <property type="evidence" value="ECO:0007669"/>
    <property type="project" value="UniProtKB-KW"/>
</dbReference>
<dbReference type="GO" id="GO:0008270">
    <property type="term" value="F:zinc ion binding"/>
    <property type="evidence" value="ECO:0007669"/>
    <property type="project" value="UniProtKB-KW"/>
</dbReference>
<dbReference type="GO" id="GO:0016567">
    <property type="term" value="P:protein ubiquitination"/>
    <property type="evidence" value="ECO:0007669"/>
    <property type="project" value="UniProtKB-UniPathway"/>
</dbReference>
<dbReference type="CDD" id="cd16461">
    <property type="entry name" value="RING-H2_EL5-like"/>
    <property type="match status" value="1"/>
</dbReference>
<dbReference type="FunFam" id="3.30.40.10:FF:000836">
    <property type="entry name" value="RING-H2 finger protein ATL40"/>
    <property type="match status" value="1"/>
</dbReference>
<dbReference type="Gene3D" id="3.30.40.10">
    <property type="entry name" value="Zinc/RING finger domain, C3HC4 (zinc finger)"/>
    <property type="match status" value="1"/>
</dbReference>
<dbReference type="InterPro" id="IPR001841">
    <property type="entry name" value="Znf_RING"/>
</dbReference>
<dbReference type="InterPro" id="IPR013083">
    <property type="entry name" value="Znf_RING/FYVE/PHD"/>
</dbReference>
<dbReference type="PANTHER" id="PTHR46539:SF24">
    <property type="entry name" value="(WILD MALAYSIAN BANANA) HYPOTHETICAL PROTEIN"/>
    <property type="match status" value="1"/>
</dbReference>
<dbReference type="PANTHER" id="PTHR46539">
    <property type="entry name" value="E3 UBIQUITIN-PROTEIN LIGASE ATL42"/>
    <property type="match status" value="1"/>
</dbReference>
<dbReference type="Pfam" id="PF13639">
    <property type="entry name" value="zf-RING_2"/>
    <property type="match status" value="1"/>
</dbReference>
<dbReference type="SMART" id="SM00184">
    <property type="entry name" value="RING"/>
    <property type="match status" value="1"/>
</dbReference>
<dbReference type="SUPFAM" id="SSF57850">
    <property type="entry name" value="RING/U-box"/>
    <property type="match status" value="1"/>
</dbReference>
<dbReference type="PROSITE" id="PS50089">
    <property type="entry name" value="ZF_RING_2"/>
    <property type="match status" value="1"/>
</dbReference>
<gene>
    <name type="primary">ATL40</name>
    <name type="ordered locus">At2g42350</name>
    <name type="ORF">MHK10.7</name>
</gene>
<protein>
    <recommendedName>
        <fullName>RING-H2 finger protein ATL40</fullName>
        <ecNumber evidence="5">2.3.2.27</ecNumber>
    </recommendedName>
    <alternativeName>
        <fullName evidence="5">RING-type E3 ubiquitin transferase ATL40</fullName>
    </alternativeName>
</protein>
<sequence>MSSNNKTDDSDDRSFWQNSTSYDASSKIFLVTTVSFSIIIIIVFVYYLYAKFVLHRRSAFQDLSFSVVSQPPKRGLDSLVIASLPTFVVGIKNDVAGTECAVCLSLLEEKDNARMLPNCKHVFHVSCVDTWLTTQSTCPVCRTEAEPSHPRLEPEPREGPVGDFAPPLDFAGVDNKTGGSSVSRLDSFRRILTRERSSNRRDHSRVDQDRELDIERQ</sequence>
<organism>
    <name type="scientific">Arabidopsis thaliana</name>
    <name type="common">Mouse-ear cress</name>
    <dbReference type="NCBI Taxonomy" id="3702"/>
    <lineage>
        <taxon>Eukaryota</taxon>
        <taxon>Viridiplantae</taxon>
        <taxon>Streptophyta</taxon>
        <taxon>Embryophyta</taxon>
        <taxon>Tracheophyta</taxon>
        <taxon>Spermatophyta</taxon>
        <taxon>Magnoliopsida</taxon>
        <taxon>eudicotyledons</taxon>
        <taxon>Gunneridae</taxon>
        <taxon>Pentapetalae</taxon>
        <taxon>rosids</taxon>
        <taxon>malvids</taxon>
        <taxon>Brassicales</taxon>
        <taxon>Brassicaceae</taxon>
        <taxon>Camelineae</taxon>
        <taxon>Arabidopsis</taxon>
    </lineage>
</organism>
<accession>Q9SLC4</accession>
<proteinExistence type="evidence at transcript level"/>
<feature type="chain" id="PRO_0000055783" description="RING-H2 finger protein ATL40">
    <location>
        <begin position="1"/>
        <end position="217"/>
    </location>
</feature>
<feature type="transmembrane region" description="Helical" evidence="2">
    <location>
        <begin position="28"/>
        <end position="48"/>
    </location>
</feature>
<feature type="zinc finger region" description="RING-type; atypical" evidence="3">
    <location>
        <begin position="100"/>
        <end position="142"/>
    </location>
</feature>
<feature type="region of interest" description="Disordered" evidence="4">
    <location>
        <begin position="143"/>
        <end position="217"/>
    </location>
</feature>
<feature type="compositionally biased region" description="Basic and acidic residues" evidence="4">
    <location>
        <begin position="143"/>
        <end position="160"/>
    </location>
</feature>
<feature type="compositionally biased region" description="Basic and acidic residues" evidence="4">
    <location>
        <begin position="186"/>
        <end position="217"/>
    </location>
</feature>
<name>ATL40_ARATH</name>
<reference key="1">
    <citation type="journal article" date="1999" name="Nature">
        <title>Sequence and analysis of chromosome 2 of the plant Arabidopsis thaliana.</title>
        <authorList>
            <person name="Lin X."/>
            <person name="Kaul S."/>
            <person name="Rounsley S.D."/>
            <person name="Shea T.P."/>
            <person name="Benito M.-I."/>
            <person name="Town C.D."/>
            <person name="Fujii C.Y."/>
            <person name="Mason T.M."/>
            <person name="Bowman C.L."/>
            <person name="Barnstead M.E."/>
            <person name="Feldblyum T.V."/>
            <person name="Buell C.R."/>
            <person name="Ketchum K.A."/>
            <person name="Lee J.J."/>
            <person name="Ronning C.M."/>
            <person name="Koo H.L."/>
            <person name="Moffat K.S."/>
            <person name="Cronin L.A."/>
            <person name="Shen M."/>
            <person name="Pai G."/>
            <person name="Van Aken S."/>
            <person name="Umayam L."/>
            <person name="Tallon L.J."/>
            <person name="Gill J.E."/>
            <person name="Adams M.D."/>
            <person name="Carrera A.J."/>
            <person name="Creasy T.H."/>
            <person name="Goodman H.M."/>
            <person name="Somerville C.R."/>
            <person name="Copenhaver G.P."/>
            <person name="Preuss D."/>
            <person name="Nierman W.C."/>
            <person name="White O."/>
            <person name="Eisen J.A."/>
            <person name="Salzberg S.L."/>
            <person name="Fraser C.M."/>
            <person name="Venter J.C."/>
        </authorList>
    </citation>
    <scope>NUCLEOTIDE SEQUENCE [LARGE SCALE GENOMIC DNA]</scope>
    <source>
        <strain>cv. Columbia</strain>
    </source>
</reference>
<reference key="2">
    <citation type="journal article" date="2017" name="Plant J.">
        <title>Araport11: a complete reannotation of the Arabidopsis thaliana reference genome.</title>
        <authorList>
            <person name="Cheng C.Y."/>
            <person name="Krishnakumar V."/>
            <person name="Chan A.P."/>
            <person name="Thibaud-Nissen F."/>
            <person name="Schobel S."/>
            <person name="Town C.D."/>
        </authorList>
    </citation>
    <scope>GENOME REANNOTATION</scope>
    <source>
        <strain>cv. Columbia</strain>
    </source>
</reference>
<reference key="3">
    <citation type="submission" date="2004-01" db="EMBL/GenBank/DDBJ databases">
        <title>Arabidopsis ORF clones.</title>
        <authorList>
            <person name="Cheuk R.F."/>
            <person name="Chen H."/>
            <person name="Kim C.J."/>
            <person name="Shinn P."/>
            <person name="Ecker J.R."/>
        </authorList>
    </citation>
    <scope>NUCLEOTIDE SEQUENCE [LARGE SCALE MRNA]</scope>
    <source>
        <strain>cv. Columbia</strain>
    </source>
</reference>
<reference key="4">
    <citation type="journal article" date="2002" name="Genome Biol.">
        <title>Evaluation and classification of RING-finger domains encoded by the Arabidopsis genome.</title>
        <authorList>
            <person name="Kosarev P."/>
            <person name="Mayer K.F.X."/>
            <person name="Hardtke C.S."/>
        </authorList>
    </citation>
    <scope>GENE FAMILY ORGANIZATION</scope>
</reference>
<reference key="5">
    <citation type="journal article" date="2006" name="J. Mol. Evol.">
        <title>The ATL gene family from Arabidopsis thaliana and Oryza sativa comprises a large number of putative ubiquitin ligases of the RING-H2 type.</title>
        <authorList>
            <person name="Serrano M."/>
            <person name="Parra S."/>
            <person name="Alcaraz L.D."/>
            <person name="Guzman P."/>
        </authorList>
    </citation>
    <scope>NOMENCLATURE</scope>
    <scope>GENE FAMILY ORGANIZATION</scope>
</reference>